<reference key="1">
    <citation type="journal article" date="2004" name="Nucleic Acids Res.">
        <title>Genome sequence of Symbiobacterium thermophilum, an uncultivable bacterium that depends on microbial commensalism.</title>
        <authorList>
            <person name="Ueda K."/>
            <person name="Yamashita A."/>
            <person name="Ishikawa J."/>
            <person name="Shimada M."/>
            <person name="Watsuji T."/>
            <person name="Morimura K."/>
            <person name="Ikeda H."/>
            <person name="Hattori M."/>
            <person name="Beppu T."/>
        </authorList>
    </citation>
    <scope>NUCLEOTIDE SEQUENCE [LARGE SCALE GENOMIC DNA]</scope>
    <source>
        <strain>DSM 24528 / JCM 14929 / IAM 14863 / T</strain>
    </source>
</reference>
<comment type="similarity">
    <text evidence="1">Belongs to the bacterial ribosomal protein bL36 family.</text>
</comment>
<accession>Q67JW7</accession>
<name>RL36_SYMTH</name>
<evidence type="ECO:0000255" key="1">
    <source>
        <dbReference type="HAMAP-Rule" id="MF_00251"/>
    </source>
</evidence>
<evidence type="ECO:0000305" key="2"/>
<protein>
    <recommendedName>
        <fullName evidence="1">Large ribosomal subunit protein bL36</fullName>
    </recommendedName>
    <alternativeName>
        <fullName evidence="2">50S ribosomal protein L36</fullName>
    </alternativeName>
</protein>
<feature type="chain" id="PRO_0000126277" description="Large ribosomal subunit protein bL36">
    <location>
        <begin position="1"/>
        <end position="37"/>
    </location>
</feature>
<sequence>MKVRPSVKPICEKCKVIKRHGHVMVICENPKHKQKQG</sequence>
<organism>
    <name type="scientific">Symbiobacterium thermophilum (strain DSM 24528 / JCM 14929 / IAM 14863 / T)</name>
    <dbReference type="NCBI Taxonomy" id="292459"/>
    <lineage>
        <taxon>Bacteria</taxon>
        <taxon>Bacillati</taxon>
        <taxon>Bacillota</taxon>
        <taxon>Clostridia</taxon>
        <taxon>Eubacteriales</taxon>
        <taxon>Symbiobacteriaceae</taxon>
        <taxon>Symbiobacterium</taxon>
    </lineage>
</organism>
<dbReference type="EMBL" id="AP006840">
    <property type="protein sequence ID" value="BAD42033.1"/>
    <property type="molecule type" value="Genomic_DNA"/>
</dbReference>
<dbReference type="RefSeq" id="WP_011197166.1">
    <property type="nucleotide sequence ID" value="NC_006177.1"/>
</dbReference>
<dbReference type="SMR" id="Q67JW7"/>
<dbReference type="STRING" id="292459.STH3051"/>
<dbReference type="KEGG" id="sth:STH3051"/>
<dbReference type="eggNOG" id="COG0257">
    <property type="taxonomic scope" value="Bacteria"/>
</dbReference>
<dbReference type="HOGENOM" id="CLU_135723_6_2_9"/>
<dbReference type="OrthoDB" id="9802520at2"/>
<dbReference type="Proteomes" id="UP000000417">
    <property type="component" value="Chromosome"/>
</dbReference>
<dbReference type="GO" id="GO:0005737">
    <property type="term" value="C:cytoplasm"/>
    <property type="evidence" value="ECO:0007669"/>
    <property type="project" value="UniProtKB-ARBA"/>
</dbReference>
<dbReference type="GO" id="GO:1990904">
    <property type="term" value="C:ribonucleoprotein complex"/>
    <property type="evidence" value="ECO:0007669"/>
    <property type="project" value="UniProtKB-KW"/>
</dbReference>
<dbReference type="GO" id="GO:0005840">
    <property type="term" value="C:ribosome"/>
    <property type="evidence" value="ECO:0007669"/>
    <property type="project" value="UniProtKB-KW"/>
</dbReference>
<dbReference type="GO" id="GO:0003735">
    <property type="term" value="F:structural constituent of ribosome"/>
    <property type="evidence" value="ECO:0007669"/>
    <property type="project" value="InterPro"/>
</dbReference>
<dbReference type="GO" id="GO:0006412">
    <property type="term" value="P:translation"/>
    <property type="evidence" value="ECO:0007669"/>
    <property type="project" value="UniProtKB-UniRule"/>
</dbReference>
<dbReference type="HAMAP" id="MF_00251">
    <property type="entry name" value="Ribosomal_bL36"/>
    <property type="match status" value="1"/>
</dbReference>
<dbReference type="InterPro" id="IPR000473">
    <property type="entry name" value="Ribosomal_bL36"/>
</dbReference>
<dbReference type="InterPro" id="IPR035977">
    <property type="entry name" value="Ribosomal_bL36_sp"/>
</dbReference>
<dbReference type="NCBIfam" id="TIGR01022">
    <property type="entry name" value="rpmJ_bact"/>
    <property type="match status" value="1"/>
</dbReference>
<dbReference type="PANTHER" id="PTHR42888">
    <property type="entry name" value="50S RIBOSOMAL PROTEIN L36, CHLOROPLASTIC"/>
    <property type="match status" value="1"/>
</dbReference>
<dbReference type="PANTHER" id="PTHR42888:SF1">
    <property type="entry name" value="LARGE RIBOSOMAL SUBUNIT PROTEIN BL36C"/>
    <property type="match status" value="1"/>
</dbReference>
<dbReference type="Pfam" id="PF00444">
    <property type="entry name" value="Ribosomal_L36"/>
    <property type="match status" value="1"/>
</dbReference>
<dbReference type="SUPFAM" id="SSF57840">
    <property type="entry name" value="Ribosomal protein L36"/>
    <property type="match status" value="1"/>
</dbReference>
<dbReference type="PROSITE" id="PS00828">
    <property type="entry name" value="RIBOSOMAL_L36"/>
    <property type="match status" value="1"/>
</dbReference>
<proteinExistence type="inferred from homology"/>
<keyword id="KW-1185">Reference proteome</keyword>
<keyword id="KW-0687">Ribonucleoprotein</keyword>
<keyword id="KW-0689">Ribosomal protein</keyword>
<gene>
    <name evidence="1" type="primary">rpmJ</name>
    <name type="ordered locus">STH3051</name>
</gene>